<sequence>MRVLHVCSELYPILKTGGLADVTAALPPALAGFGVDSRVLVPGFPAFINAIKDKQLLINIPSRFGAEEINIFLAKIPNTKIDIYVIDAPSLFARPGNPYADSSNQAYADNYLRFALLGWVAARISEGLDAKWKPEIVHSHDWHAGLVPAYIKASELASGKKAVKTVFTVHNLAYQGLFPMSVFTELDLPGIFLSMNGLEFYGQVSFMKAGLYFADKITTVSPTYAKEIQIYEQGCGLEGLLADRHNDLYGVLNGVDPQIWNPKKDSLIATNYSSTTVATGKAKCKLALQQMMGLAEKEDALLFGIVTRLTEQKGLNLLIEAIGEITSRGGQIVLLGSGDKALEEVFLAAAKKYSKSIAVQIGYDEEQAHRIIAGSDVIMVPSRFEPCGLTQLYGLTYGTLPLVHKVGGLADTIIDSSLENLADGTATGFVFDEFSVESLTLAIRRAFALYNRKTDWKKVRKTAMQQQVTWDSSAEKIYQIYKNLVIENN</sequence>
<dbReference type="EC" id="2.4.1.21" evidence="1"/>
<dbReference type="EMBL" id="CP000437">
    <property type="protein sequence ID" value="ABI82470.1"/>
    <property type="molecule type" value="Genomic_DNA"/>
</dbReference>
<dbReference type="RefSeq" id="WP_010030994.1">
    <property type="nucleotide sequence ID" value="NC_017463.1"/>
</dbReference>
<dbReference type="SMR" id="Q0BN64"/>
<dbReference type="CAZy" id="GT5">
    <property type="family name" value="Glycosyltransferase Family 5"/>
</dbReference>
<dbReference type="KEGG" id="fth:FTH_0484"/>
<dbReference type="UniPathway" id="UPA00164"/>
<dbReference type="GO" id="GO:0005829">
    <property type="term" value="C:cytosol"/>
    <property type="evidence" value="ECO:0007669"/>
    <property type="project" value="TreeGrafter"/>
</dbReference>
<dbReference type="GO" id="GO:0009011">
    <property type="term" value="F:alpha-1,4-glucan glucosyltransferase (ADP-glucose donor) activity"/>
    <property type="evidence" value="ECO:0007669"/>
    <property type="project" value="UniProtKB-UniRule"/>
</dbReference>
<dbReference type="GO" id="GO:0004373">
    <property type="term" value="F:alpha-1,4-glucan glucosyltransferase (UDP-glucose donor) activity"/>
    <property type="evidence" value="ECO:0007669"/>
    <property type="project" value="InterPro"/>
</dbReference>
<dbReference type="GO" id="GO:0005978">
    <property type="term" value="P:glycogen biosynthetic process"/>
    <property type="evidence" value="ECO:0007669"/>
    <property type="project" value="UniProtKB-UniRule"/>
</dbReference>
<dbReference type="CDD" id="cd03791">
    <property type="entry name" value="GT5_Glycogen_synthase_DULL1-like"/>
    <property type="match status" value="1"/>
</dbReference>
<dbReference type="Gene3D" id="3.40.50.2000">
    <property type="entry name" value="Glycogen Phosphorylase B"/>
    <property type="match status" value="2"/>
</dbReference>
<dbReference type="HAMAP" id="MF_00484">
    <property type="entry name" value="Glycogen_synth"/>
    <property type="match status" value="1"/>
</dbReference>
<dbReference type="InterPro" id="IPR001296">
    <property type="entry name" value="Glyco_trans_1"/>
</dbReference>
<dbReference type="InterPro" id="IPR011835">
    <property type="entry name" value="GS/SS"/>
</dbReference>
<dbReference type="InterPro" id="IPR013534">
    <property type="entry name" value="Starch_synth_cat_dom"/>
</dbReference>
<dbReference type="NCBIfam" id="TIGR02095">
    <property type="entry name" value="glgA"/>
    <property type="match status" value="1"/>
</dbReference>
<dbReference type="NCBIfam" id="NF001899">
    <property type="entry name" value="PRK00654.1-2"/>
    <property type="match status" value="1"/>
</dbReference>
<dbReference type="PANTHER" id="PTHR45825:SF11">
    <property type="entry name" value="ALPHA AMYLASE DOMAIN-CONTAINING PROTEIN"/>
    <property type="match status" value="1"/>
</dbReference>
<dbReference type="PANTHER" id="PTHR45825">
    <property type="entry name" value="GRANULE-BOUND STARCH SYNTHASE 1, CHLOROPLASTIC/AMYLOPLASTIC"/>
    <property type="match status" value="1"/>
</dbReference>
<dbReference type="Pfam" id="PF08323">
    <property type="entry name" value="Glyco_transf_5"/>
    <property type="match status" value="1"/>
</dbReference>
<dbReference type="Pfam" id="PF00534">
    <property type="entry name" value="Glycos_transf_1"/>
    <property type="match status" value="1"/>
</dbReference>
<dbReference type="SUPFAM" id="SSF53756">
    <property type="entry name" value="UDP-Glycosyltransferase/glycogen phosphorylase"/>
    <property type="match status" value="1"/>
</dbReference>
<reference key="1">
    <citation type="journal article" date="2006" name="J. Bacteriol.">
        <title>Chromosome rearrangement and diversification of Francisella tularensis revealed by the type B (OSU18) genome sequence.</title>
        <authorList>
            <person name="Petrosino J.F."/>
            <person name="Xiang Q."/>
            <person name="Karpathy S.E."/>
            <person name="Jiang H."/>
            <person name="Yerrapragada S."/>
            <person name="Liu Y."/>
            <person name="Gioia J."/>
            <person name="Hemphill L."/>
            <person name="Gonzalez A."/>
            <person name="Raghavan T.M."/>
            <person name="Uzman A."/>
            <person name="Fox G.E."/>
            <person name="Highlander S."/>
            <person name="Reichard M."/>
            <person name="Morton R.J."/>
            <person name="Clinkenbeard K.D."/>
            <person name="Weinstock G.M."/>
        </authorList>
    </citation>
    <scope>NUCLEOTIDE SEQUENCE [LARGE SCALE GENOMIC DNA]</scope>
    <source>
        <strain>OSU18</strain>
    </source>
</reference>
<name>GLGA_FRATO</name>
<comment type="function">
    <text evidence="1">Synthesizes alpha-1,4-glucan chains using ADP-glucose.</text>
</comment>
<comment type="catalytic activity">
    <reaction evidence="1">
        <text>[(1-&gt;4)-alpha-D-glucosyl](n) + ADP-alpha-D-glucose = [(1-&gt;4)-alpha-D-glucosyl](n+1) + ADP + H(+)</text>
        <dbReference type="Rhea" id="RHEA:18189"/>
        <dbReference type="Rhea" id="RHEA-COMP:9584"/>
        <dbReference type="Rhea" id="RHEA-COMP:9587"/>
        <dbReference type="ChEBI" id="CHEBI:15378"/>
        <dbReference type="ChEBI" id="CHEBI:15444"/>
        <dbReference type="ChEBI" id="CHEBI:57498"/>
        <dbReference type="ChEBI" id="CHEBI:456216"/>
        <dbReference type="EC" id="2.4.1.21"/>
    </reaction>
</comment>
<comment type="pathway">
    <text evidence="1">Glycan biosynthesis; glycogen biosynthesis.</text>
</comment>
<comment type="similarity">
    <text evidence="1">Belongs to the glycosyltransferase 1 family. Bacterial/plant glycogen synthase subfamily.</text>
</comment>
<evidence type="ECO:0000255" key="1">
    <source>
        <dbReference type="HAMAP-Rule" id="MF_00484"/>
    </source>
</evidence>
<accession>Q0BN64</accession>
<feature type="chain" id="PRO_1000014358" description="Glycogen synthase">
    <location>
        <begin position="1"/>
        <end position="489"/>
    </location>
</feature>
<feature type="binding site" evidence="1">
    <location>
        <position position="15"/>
    </location>
    <ligand>
        <name>ADP-alpha-D-glucose</name>
        <dbReference type="ChEBI" id="CHEBI:57498"/>
    </ligand>
</feature>
<keyword id="KW-0320">Glycogen biosynthesis</keyword>
<keyword id="KW-0328">Glycosyltransferase</keyword>
<keyword id="KW-0808">Transferase</keyword>
<organism>
    <name type="scientific">Francisella tularensis subsp. holarctica (strain OSU18)</name>
    <dbReference type="NCBI Taxonomy" id="393011"/>
    <lineage>
        <taxon>Bacteria</taxon>
        <taxon>Pseudomonadati</taxon>
        <taxon>Pseudomonadota</taxon>
        <taxon>Gammaproteobacteria</taxon>
        <taxon>Thiotrichales</taxon>
        <taxon>Francisellaceae</taxon>
        <taxon>Francisella</taxon>
    </lineage>
</organism>
<gene>
    <name evidence="1" type="primary">glgA</name>
    <name type="ordered locus">FTH_0484</name>
</gene>
<proteinExistence type="inferred from homology"/>
<protein>
    <recommendedName>
        <fullName evidence="1">Glycogen synthase</fullName>
        <ecNumber evidence="1">2.4.1.21</ecNumber>
    </recommendedName>
    <alternativeName>
        <fullName evidence="1">Starch [bacterial glycogen] synthase</fullName>
    </alternativeName>
</protein>